<name>HSLV_JANMA</name>
<proteinExistence type="inferred from homology"/>
<organism>
    <name type="scientific">Janthinobacterium sp. (strain Marseille)</name>
    <name type="common">Minibacterium massiliensis</name>
    <dbReference type="NCBI Taxonomy" id="375286"/>
    <lineage>
        <taxon>Bacteria</taxon>
        <taxon>Pseudomonadati</taxon>
        <taxon>Pseudomonadota</taxon>
        <taxon>Betaproteobacteria</taxon>
        <taxon>Burkholderiales</taxon>
        <taxon>Oxalobacteraceae</taxon>
        <taxon>Janthinobacterium</taxon>
    </lineage>
</organism>
<gene>
    <name evidence="1" type="primary">hslV</name>
    <name type="ordered locus">mma_3213</name>
</gene>
<reference key="1">
    <citation type="journal article" date="2007" name="PLoS Genet.">
        <title>Genome analysis of Minibacterium massiliensis highlights the convergent evolution of water-living bacteria.</title>
        <authorList>
            <person name="Audic S."/>
            <person name="Robert C."/>
            <person name="Campagna B."/>
            <person name="Parinello H."/>
            <person name="Claverie J.-M."/>
            <person name="Raoult D."/>
            <person name="Drancourt M."/>
        </authorList>
    </citation>
    <scope>NUCLEOTIDE SEQUENCE [LARGE SCALE GENOMIC DNA]</scope>
    <source>
        <strain>Marseille</strain>
    </source>
</reference>
<comment type="function">
    <text evidence="1">Protease subunit of a proteasome-like degradation complex believed to be a general protein degrading machinery.</text>
</comment>
<comment type="catalytic activity">
    <reaction evidence="1">
        <text>ATP-dependent cleavage of peptide bonds with broad specificity.</text>
        <dbReference type="EC" id="3.4.25.2"/>
    </reaction>
</comment>
<comment type="activity regulation">
    <text evidence="1">Allosterically activated by HslU binding.</text>
</comment>
<comment type="subunit">
    <text evidence="1">A double ring-shaped homohexamer of HslV is capped on each side by a ring-shaped HslU homohexamer. The assembly of the HslU/HslV complex is dependent on binding of ATP.</text>
</comment>
<comment type="subcellular location">
    <subcellularLocation>
        <location evidence="1">Cytoplasm</location>
    </subcellularLocation>
</comment>
<comment type="similarity">
    <text evidence="1">Belongs to the peptidase T1B family. HslV subfamily.</text>
</comment>
<feature type="chain" id="PRO_1000012623" description="ATP-dependent protease subunit HslV">
    <location>
        <begin position="1"/>
        <end position="178"/>
    </location>
</feature>
<feature type="active site" evidence="1">
    <location>
        <position position="7"/>
    </location>
</feature>
<feature type="binding site" evidence="1">
    <location>
        <position position="162"/>
    </location>
    <ligand>
        <name>Na(+)</name>
        <dbReference type="ChEBI" id="CHEBI:29101"/>
    </ligand>
</feature>
<feature type="binding site" evidence="1">
    <location>
        <position position="165"/>
    </location>
    <ligand>
        <name>Na(+)</name>
        <dbReference type="ChEBI" id="CHEBI:29101"/>
    </ligand>
</feature>
<feature type="binding site" evidence="1">
    <location>
        <position position="168"/>
    </location>
    <ligand>
        <name>Na(+)</name>
        <dbReference type="ChEBI" id="CHEBI:29101"/>
    </ligand>
</feature>
<keyword id="KW-0021">Allosteric enzyme</keyword>
<keyword id="KW-0963">Cytoplasm</keyword>
<keyword id="KW-0378">Hydrolase</keyword>
<keyword id="KW-0479">Metal-binding</keyword>
<keyword id="KW-0645">Protease</keyword>
<keyword id="KW-0915">Sodium</keyword>
<keyword id="KW-0888">Threonine protease</keyword>
<evidence type="ECO:0000255" key="1">
    <source>
        <dbReference type="HAMAP-Rule" id="MF_00248"/>
    </source>
</evidence>
<dbReference type="EC" id="3.4.25.2" evidence="1"/>
<dbReference type="EMBL" id="CP000269">
    <property type="protein sequence ID" value="ABR89719.1"/>
    <property type="molecule type" value="Genomic_DNA"/>
</dbReference>
<dbReference type="RefSeq" id="WP_012081056.1">
    <property type="nucleotide sequence ID" value="NC_009659.1"/>
</dbReference>
<dbReference type="SMR" id="A6T306"/>
<dbReference type="STRING" id="375286.mma_3213"/>
<dbReference type="MEROPS" id="T01.006"/>
<dbReference type="KEGG" id="mms:mma_3213"/>
<dbReference type="eggNOG" id="COG5405">
    <property type="taxonomic scope" value="Bacteria"/>
</dbReference>
<dbReference type="HOGENOM" id="CLU_093872_1_0_4"/>
<dbReference type="OrthoDB" id="9804884at2"/>
<dbReference type="Proteomes" id="UP000006388">
    <property type="component" value="Chromosome"/>
</dbReference>
<dbReference type="GO" id="GO:0009376">
    <property type="term" value="C:HslUV protease complex"/>
    <property type="evidence" value="ECO:0007669"/>
    <property type="project" value="UniProtKB-UniRule"/>
</dbReference>
<dbReference type="GO" id="GO:0005839">
    <property type="term" value="C:proteasome core complex"/>
    <property type="evidence" value="ECO:0007669"/>
    <property type="project" value="InterPro"/>
</dbReference>
<dbReference type="GO" id="GO:0046872">
    <property type="term" value="F:metal ion binding"/>
    <property type="evidence" value="ECO:0007669"/>
    <property type="project" value="UniProtKB-KW"/>
</dbReference>
<dbReference type="GO" id="GO:0004298">
    <property type="term" value="F:threonine-type endopeptidase activity"/>
    <property type="evidence" value="ECO:0007669"/>
    <property type="project" value="UniProtKB-KW"/>
</dbReference>
<dbReference type="GO" id="GO:0051603">
    <property type="term" value="P:proteolysis involved in protein catabolic process"/>
    <property type="evidence" value="ECO:0007669"/>
    <property type="project" value="InterPro"/>
</dbReference>
<dbReference type="CDD" id="cd01913">
    <property type="entry name" value="protease_HslV"/>
    <property type="match status" value="1"/>
</dbReference>
<dbReference type="FunFam" id="3.60.20.10:FF:000002">
    <property type="entry name" value="ATP-dependent protease subunit HslV"/>
    <property type="match status" value="1"/>
</dbReference>
<dbReference type="Gene3D" id="3.60.20.10">
    <property type="entry name" value="Glutamine Phosphoribosylpyrophosphate, subunit 1, domain 1"/>
    <property type="match status" value="1"/>
</dbReference>
<dbReference type="HAMAP" id="MF_00248">
    <property type="entry name" value="HslV"/>
    <property type="match status" value="1"/>
</dbReference>
<dbReference type="InterPro" id="IPR022281">
    <property type="entry name" value="ATP-dep_Prtase_HsIV_su"/>
</dbReference>
<dbReference type="InterPro" id="IPR029055">
    <property type="entry name" value="Ntn_hydrolases_N"/>
</dbReference>
<dbReference type="InterPro" id="IPR001353">
    <property type="entry name" value="Proteasome_sua/b"/>
</dbReference>
<dbReference type="InterPro" id="IPR023333">
    <property type="entry name" value="Proteasome_suB-type"/>
</dbReference>
<dbReference type="NCBIfam" id="TIGR03692">
    <property type="entry name" value="ATP_dep_HslV"/>
    <property type="match status" value="1"/>
</dbReference>
<dbReference type="NCBIfam" id="NF003964">
    <property type="entry name" value="PRK05456.1"/>
    <property type="match status" value="1"/>
</dbReference>
<dbReference type="PANTHER" id="PTHR32194:SF0">
    <property type="entry name" value="ATP-DEPENDENT PROTEASE SUBUNIT HSLV"/>
    <property type="match status" value="1"/>
</dbReference>
<dbReference type="PANTHER" id="PTHR32194">
    <property type="entry name" value="METALLOPROTEASE TLDD"/>
    <property type="match status" value="1"/>
</dbReference>
<dbReference type="Pfam" id="PF00227">
    <property type="entry name" value="Proteasome"/>
    <property type="match status" value="1"/>
</dbReference>
<dbReference type="PIRSF" id="PIRSF039093">
    <property type="entry name" value="HslV"/>
    <property type="match status" value="1"/>
</dbReference>
<dbReference type="SUPFAM" id="SSF56235">
    <property type="entry name" value="N-terminal nucleophile aminohydrolases (Ntn hydrolases)"/>
    <property type="match status" value="1"/>
</dbReference>
<dbReference type="PROSITE" id="PS51476">
    <property type="entry name" value="PROTEASOME_BETA_2"/>
    <property type="match status" value="1"/>
</dbReference>
<protein>
    <recommendedName>
        <fullName evidence="1">ATP-dependent protease subunit HslV</fullName>
        <ecNumber evidence="1">3.4.25.2</ecNumber>
    </recommendedName>
</protein>
<accession>A6T306</accession>
<sequence length="178" mass="19240">MEQFHGTTILSVRRGNIVALGGDGQVTLGNIVMKGTARKVRKVYNGKVLVGFAGGTADAFTLLERFESKLEKHQGHLMRASVELAKDWRTDRMLRRLEAMLLVADKETTLIITGNGDVLEPNDGIGAIGSGGTYAQSAAKALQENTDLSPEDIVKKSLTIAGELCIYTNLSHIIETLD</sequence>